<keyword id="KW-0046">Antibiotic resistance</keyword>
<keyword id="KW-1003">Cell membrane</keyword>
<keyword id="KW-0133">Cell shape</keyword>
<keyword id="KW-0961">Cell wall biogenesis/degradation</keyword>
<keyword id="KW-0378">Hydrolase</keyword>
<keyword id="KW-0472">Membrane</keyword>
<keyword id="KW-0573">Peptidoglycan synthesis</keyword>
<keyword id="KW-1185">Reference proteome</keyword>
<keyword id="KW-0812">Transmembrane</keyword>
<keyword id="KW-1133">Transmembrane helix</keyword>
<protein>
    <recommendedName>
        <fullName evidence="1">Undecaprenyl-diphosphatase 2</fullName>
        <ecNumber evidence="1">3.6.1.27</ecNumber>
    </recommendedName>
    <alternativeName>
        <fullName evidence="1">Bacitracin resistance protein 2</fullName>
    </alternativeName>
    <alternativeName>
        <fullName evidence="1">Undecaprenyl pyrophosphate phosphatase 2</fullName>
    </alternativeName>
</protein>
<name>UPPP2_FRAAA</name>
<proteinExistence type="inferred from homology"/>
<comment type="function">
    <text evidence="1">Catalyzes the dephosphorylation of undecaprenyl diphosphate (UPP). Confers resistance to bacitracin.</text>
</comment>
<comment type="catalytic activity">
    <reaction evidence="1">
        <text>di-trans,octa-cis-undecaprenyl diphosphate + H2O = di-trans,octa-cis-undecaprenyl phosphate + phosphate + H(+)</text>
        <dbReference type="Rhea" id="RHEA:28094"/>
        <dbReference type="ChEBI" id="CHEBI:15377"/>
        <dbReference type="ChEBI" id="CHEBI:15378"/>
        <dbReference type="ChEBI" id="CHEBI:43474"/>
        <dbReference type="ChEBI" id="CHEBI:58405"/>
        <dbReference type="ChEBI" id="CHEBI:60392"/>
        <dbReference type="EC" id="3.6.1.27"/>
    </reaction>
</comment>
<comment type="subcellular location">
    <subcellularLocation>
        <location evidence="1">Cell membrane</location>
        <topology evidence="1">Multi-pass membrane protein</topology>
    </subcellularLocation>
</comment>
<comment type="miscellaneous">
    <text>Bacitracin is thought to be involved in the inhibition of peptidoglycan synthesis by sequestering undecaprenyl diphosphate, thereby reducing the pool of lipid carrier available.</text>
</comment>
<comment type="similarity">
    <text evidence="1">Belongs to the UppP family.</text>
</comment>
<comment type="sequence caution" evidence="3">
    <conflict type="erroneous initiation">
        <sequence resource="EMBL-CDS" id="CAJ62321"/>
    </conflict>
</comment>
<gene>
    <name evidence="1" type="primary">uppP2</name>
    <name type="ordered locus">FRAAL3678</name>
</gene>
<dbReference type="EC" id="3.6.1.27" evidence="1"/>
<dbReference type="EMBL" id="CT573213">
    <property type="protein sequence ID" value="CAJ62321.1"/>
    <property type="status" value="ALT_INIT"/>
    <property type="molecule type" value="Genomic_DNA"/>
</dbReference>
<dbReference type="RefSeq" id="WP_011604817.1">
    <property type="nucleotide sequence ID" value="NC_008278.1"/>
</dbReference>
<dbReference type="SMR" id="Q0RJJ1"/>
<dbReference type="STRING" id="326424.FRAAL3678"/>
<dbReference type="KEGG" id="fal:FRAAL3678"/>
<dbReference type="eggNOG" id="COG1968">
    <property type="taxonomic scope" value="Bacteria"/>
</dbReference>
<dbReference type="HOGENOM" id="CLU_060296_1_1_11"/>
<dbReference type="OrthoDB" id="9808289at2"/>
<dbReference type="Proteomes" id="UP000000657">
    <property type="component" value="Chromosome"/>
</dbReference>
<dbReference type="GO" id="GO:0005886">
    <property type="term" value="C:plasma membrane"/>
    <property type="evidence" value="ECO:0007669"/>
    <property type="project" value="UniProtKB-SubCell"/>
</dbReference>
<dbReference type="GO" id="GO:0050380">
    <property type="term" value="F:undecaprenyl-diphosphatase activity"/>
    <property type="evidence" value="ECO:0007669"/>
    <property type="project" value="UniProtKB-UniRule"/>
</dbReference>
<dbReference type="GO" id="GO:0071555">
    <property type="term" value="P:cell wall organization"/>
    <property type="evidence" value="ECO:0007669"/>
    <property type="project" value="UniProtKB-KW"/>
</dbReference>
<dbReference type="GO" id="GO:0009252">
    <property type="term" value="P:peptidoglycan biosynthetic process"/>
    <property type="evidence" value="ECO:0007669"/>
    <property type="project" value="UniProtKB-KW"/>
</dbReference>
<dbReference type="GO" id="GO:0008360">
    <property type="term" value="P:regulation of cell shape"/>
    <property type="evidence" value="ECO:0007669"/>
    <property type="project" value="UniProtKB-KW"/>
</dbReference>
<dbReference type="GO" id="GO:0046677">
    <property type="term" value="P:response to antibiotic"/>
    <property type="evidence" value="ECO:0007669"/>
    <property type="project" value="UniProtKB-UniRule"/>
</dbReference>
<dbReference type="HAMAP" id="MF_01006">
    <property type="entry name" value="Undec_diphosphatase"/>
    <property type="match status" value="1"/>
</dbReference>
<dbReference type="InterPro" id="IPR003824">
    <property type="entry name" value="UppP"/>
</dbReference>
<dbReference type="NCBIfam" id="NF001395">
    <property type="entry name" value="PRK00281.3-1"/>
    <property type="match status" value="1"/>
</dbReference>
<dbReference type="PANTHER" id="PTHR30622">
    <property type="entry name" value="UNDECAPRENYL-DIPHOSPHATASE"/>
    <property type="match status" value="1"/>
</dbReference>
<dbReference type="PANTHER" id="PTHR30622:SF4">
    <property type="entry name" value="UNDECAPRENYL-DIPHOSPHATASE"/>
    <property type="match status" value="1"/>
</dbReference>
<dbReference type="Pfam" id="PF02673">
    <property type="entry name" value="BacA"/>
    <property type="match status" value="2"/>
</dbReference>
<reference key="1">
    <citation type="journal article" date="2007" name="Genome Res.">
        <title>Genome characteristics of facultatively symbiotic Frankia sp. strains reflect host range and host plant biogeography.</title>
        <authorList>
            <person name="Normand P."/>
            <person name="Lapierre P."/>
            <person name="Tisa L.S."/>
            <person name="Gogarten J.P."/>
            <person name="Alloisio N."/>
            <person name="Bagnarol E."/>
            <person name="Bassi C.A."/>
            <person name="Berry A.M."/>
            <person name="Bickhart D.M."/>
            <person name="Choisne N."/>
            <person name="Couloux A."/>
            <person name="Cournoyer B."/>
            <person name="Cruveiller S."/>
            <person name="Daubin V."/>
            <person name="Demange N."/>
            <person name="Francino M.P."/>
            <person name="Goltsman E."/>
            <person name="Huang Y."/>
            <person name="Kopp O.R."/>
            <person name="Labarre L."/>
            <person name="Lapidus A."/>
            <person name="Lavire C."/>
            <person name="Marechal J."/>
            <person name="Martinez M."/>
            <person name="Mastronunzio J.E."/>
            <person name="Mullin B.C."/>
            <person name="Niemann J."/>
            <person name="Pujic P."/>
            <person name="Rawnsley T."/>
            <person name="Rouy Z."/>
            <person name="Schenowitz C."/>
            <person name="Sellstedt A."/>
            <person name="Tavares F."/>
            <person name="Tomkins J.P."/>
            <person name="Vallenet D."/>
            <person name="Valverde C."/>
            <person name="Wall L.G."/>
            <person name="Wang Y."/>
            <person name="Medigue C."/>
            <person name="Benson D.R."/>
        </authorList>
    </citation>
    <scope>NUCLEOTIDE SEQUENCE [LARGE SCALE GENOMIC DNA]</scope>
    <source>
        <strain>DSM 45986 / CECT 9034 / ACN14a</strain>
    </source>
</reference>
<feature type="chain" id="PRO_0000290710" description="Undecaprenyl-diphosphatase 2">
    <location>
        <begin position="1"/>
        <end position="343"/>
    </location>
</feature>
<feature type="transmembrane region" description="Helical" evidence="1">
    <location>
        <begin position="21"/>
        <end position="41"/>
    </location>
</feature>
<feature type="transmembrane region" description="Helical" evidence="1">
    <location>
        <begin position="57"/>
        <end position="77"/>
    </location>
</feature>
<feature type="transmembrane region" description="Helical" evidence="1">
    <location>
        <begin position="104"/>
        <end position="124"/>
    </location>
</feature>
<feature type="transmembrane region" description="Helical" evidence="1">
    <location>
        <begin position="129"/>
        <end position="149"/>
    </location>
</feature>
<feature type="transmembrane region" description="Helical" evidence="1">
    <location>
        <begin position="225"/>
        <end position="245"/>
    </location>
</feature>
<feature type="transmembrane region" description="Helical" evidence="1">
    <location>
        <begin position="265"/>
        <end position="285"/>
    </location>
</feature>
<feature type="transmembrane region" description="Helical" evidence="1">
    <location>
        <begin position="294"/>
        <end position="314"/>
    </location>
</feature>
<feature type="transmembrane region" description="Helical" evidence="1">
    <location>
        <begin position="322"/>
        <end position="342"/>
    </location>
</feature>
<feature type="region of interest" description="Disordered" evidence="2">
    <location>
        <begin position="179"/>
        <end position="202"/>
    </location>
</feature>
<feature type="compositionally biased region" description="Low complexity" evidence="2">
    <location>
        <begin position="179"/>
        <end position="193"/>
    </location>
</feature>
<accession>Q0RJJ1</accession>
<organism>
    <name type="scientific">Frankia alni (strain DSM 45986 / CECT 9034 / ACN14a)</name>
    <dbReference type="NCBI Taxonomy" id="326424"/>
    <lineage>
        <taxon>Bacteria</taxon>
        <taxon>Bacillati</taxon>
        <taxon>Actinomycetota</taxon>
        <taxon>Actinomycetes</taxon>
        <taxon>Frankiales</taxon>
        <taxon>Frankiaceae</taxon>
        <taxon>Frankia</taxon>
    </lineage>
</organism>
<evidence type="ECO:0000255" key="1">
    <source>
        <dbReference type="HAMAP-Rule" id="MF_01006"/>
    </source>
</evidence>
<evidence type="ECO:0000256" key="2">
    <source>
        <dbReference type="SAM" id="MobiDB-lite"/>
    </source>
</evidence>
<evidence type="ECO:0000305" key="3"/>
<sequence>MHELTYLQAGVIGLLQGITELFPVSSLGHSVLIPALIGGSWQHLVTENASGNSEGSPYLTFVVGLHVATAVALLVFFRSDWARVIRAFLTTLRTRRIETSAQRLAWLIVAATVPVGIIGLALEHTFRTLFAKPLAAALFLTANGMILLAGERLRRRSEQRAGTHQASARAEPATIPLTVPAPATVPTQTTSAPGGRATARHTTAPRGGLVVSEHRSLDTLAYREAGVIGLFQTLALLAGISRSGITMVAGLLRGLDHEDAARFSFLLATPVILAAGLLKLPALAGPAGDGIRGQVILGALIAGIAAYLSIRFLVRYFETRTLTPFAIYCLLTGALCTVRFAIA</sequence>